<sequence>MKFLILTALCAVTLAFVPINHQSAVETLTGQALVDYVNSAQSLFKTEHVEITEEEMKFKLMDGKYAAAHSDEIRATEQEVVLASVPATFDSRTQWSECKSIKLIRDQATCGSCWAFGAAEMISDRTCIETKGAQQPIISPDDLLSCCGSSCGNGCEGGYPIQALRWWDSKGVVTGGDYHGAGCKPYPIAPCTSGNCPESKTPSCSMSCQSGYSTAYAKDKHFGVSAYAVPKNAASIQAEIYANGPVEAAFSVYEDFYKYKSGVYKHTAGKYLGGHAIKIIGWGTESGSPYWLVANSWGVNWGESGFFKIYRGDDQCGIESAVVAGKAKV</sequence>
<feature type="signal peptide" evidence="2">
    <location>
        <begin position="1"/>
        <end position="15"/>
    </location>
</feature>
<feature type="propeptide" id="PRO_0000026190" description="Activation peptide" evidence="2">
    <location>
        <begin position="16"/>
        <end position="84"/>
    </location>
</feature>
<feature type="chain" id="PRO_0000026191" description="Gut-specific cysteine proteinase">
    <location>
        <begin position="85"/>
        <end position="329"/>
    </location>
</feature>
<feature type="active site" evidence="1">
    <location>
        <position position="113"/>
    </location>
</feature>
<feature type="active site" evidence="1">
    <location>
        <position position="275"/>
    </location>
</feature>
<feature type="active site" evidence="1">
    <location>
        <position position="295"/>
    </location>
</feature>
<feature type="disulfide bond" evidence="1">
    <location>
        <begin position="98"/>
        <end position="127"/>
    </location>
</feature>
<feature type="disulfide bond" evidence="1">
    <location>
        <begin position="110"/>
        <end position="155"/>
    </location>
</feature>
<feature type="disulfide bond" evidence="1">
    <location>
        <begin position="146"/>
        <end position="204"/>
    </location>
</feature>
<feature type="disulfide bond" evidence="1">
    <location>
        <begin position="147"/>
        <end position="151"/>
    </location>
</feature>
<feature type="disulfide bond" evidence="1">
    <location>
        <begin position="183"/>
        <end position="208"/>
    </location>
</feature>
<feature type="disulfide bond" evidence="1">
    <location>
        <begin position="191"/>
        <end position="196"/>
    </location>
</feature>
<reference key="1">
    <citation type="journal article" date="1992" name="Mol. Biochem. Parasitol.">
        <title>Gut-specific and developmental expression of a Caenorhabditis elegans cysteine protease gene.</title>
        <authorList>
            <person name="Ray C."/>
            <person name="McKerrow J.H."/>
        </authorList>
    </citation>
    <scope>NUCLEOTIDE SEQUENCE [GENOMIC DNA]</scope>
    <scope>FUNCTION</scope>
    <scope>TISSUE SPECIFICITY</scope>
    <scope>DEVELOPMENTAL STAGE</scope>
    <source>
        <strain>Bristol N2</strain>
    </source>
</reference>
<reference key="2">
    <citation type="journal article" date="1998" name="Science">
        <title>Genome sequence of the nematode C. elegans: a platform for investigating biology.</title>
        <authorList>
            <consortium name="The C. elegans sequencing consortium"/>
        </authorList>
    </citation>
    <scope>NUCLEOTIDE SEQUENCE [LARGE SCALE GENOMIC DNA]</scope>
    <source>
        <strain>Bristol N2</strain>
    </source>
</reference>
<reference key="3">
    <citation type="journal article" date="1998" name="J. Mol. Biol.">
        <title>Regulation of the Caenorhabditis elegans gut cysteine protease gene cpr-1: requirement for GATA motifs.</title>
        <authorList>
            <person name="Britton C."/>
            <person name="McKerrow J.H."/>
            <person name="Johnstone I.L."/>
        </authorList>
    </citation>
    <scope>SUBUNIT</scope>
    <scope>TISSUE SPECIFICITY</scope>
    <scope>DEVELOPMENTAL STAGE</scope>
</reference>
<keyword id="KW-1015">Disulfide bond</keyword>
<keyword id="KW-0378">Hydrolase</keyword>
<keyword id="KW-0645">Protease</keyword>
<keyword id="KW-1185">Reference proteome</keyword>
<keyword id="KW-0732">Signal</keyword>
<keyword id="KW-0788">Thiol protease</keyword>
<keyword id="KW-0865">Zymogen</keyword>
<organism>
    <name type="scientific">Caenorhabditis elegans</name>
    <dbReference type="NCBI Taxonomy" id="6239"/>
    <lineage>
        <taxon>Eukaryota</taxon>
        <taxon>Metazoa</taxon>
        <taxon>Ecdysozoa</taxon>
        <taxon>Nematoda</taxon>
        <taxon>Chromadorea</taxon>
        <taxon>Rhabditida</taxon>
        <taxon>Rhabditina</taxon>
        <taxon>Rhabditomorpha</taxon>
        <taxon>Rhabditoidea</taxon>
        <taxon>Rhabditidae</taxon>
        <taxon>Peloderinae</taxon>
        <taxon>Caenorhabditis</taxon>
    </lineage>
</organism>
<gene>
    <name type="primary">cpr-1</name>
    <name type="synonym">gcp-1</name>
    <name type="ORF">C52E4.1</name>
</gene>
<accession>P25807</accession>
<accession>Q18783</accession>
<dbReference type="EC" id="3.4.22.-"/>
<dbReference type="EMBL" id="M74797">
    <property type="protein sequence ID" value="AAB88058.1"/>
    <property type="molecule type" value="Genomic_DNA"/>
</dbReference>
<dbReference type="EMBL" id="Z78012">
    <property type="protein sequence ID" value="CAB01410.2"/>
    <property type="molecule type" value="Genomic_DNA"/>
</dbReference>
<dbReference type="PIR" id="T20148">
    <property type="entry name" value="T20148"/>
</dbReference>
<dbReference type="RefSeq" id="NP_506002.2">
    <property type="nucleotide sequence ID" value="NM_073601.9"/>
</dbReference>
<dbReference type="SMR" id="P25807"/>
<dbReference type="BioGRID" id="44661">
    <property type="interactions" value="21"/>
</dbReference>
<dbReference type="DIP" id="DIP-25619N"/>
<dbReference type="FunCoup" id="P25807">
    <property type="interactions" value="185"/>
</dbReference>
<dbReference type="STRING" id="6239.C52E4.1.1"/>
<dbReference type="MEROPS" id="C01.A32"/>
<dbReference type="PaxDb" id="6239-C52E4.1"/>
<dbReference type="PeptideAtlas" id="P25807"/>
<dbReference type="EnsemblMetazoa" id="C52E4.1.1">
    <property type="protein sequence ID" value="C52E4.1.1"/>
    <property type="gene ID" value="WBGene00000781"/>
</dbReference>
<dbReference type="GeneID" id="179637"/>
<dbReference type="KEGG" id="cel:CELE_C52E4.1"/>
<dbReference type="UCSC" id="C52E4.1">
    <property type="organism name" value="c. elegans"/>
</dbReference>
<dbReference type="AGR" id="WB:WBGene00000781"/>
<dbReference type="CTD" id="179637"/>
<dbReference type="WormBase" id="C52E4.1">
    <property type="protein sequence ID" value="CE31896"/>
    <property type="gene ID" value="WBGene00000781"/>
    <property type="gene designation" value="cpr-1"/>
</dbReference>
<dbReference type="eggNOG" id="KOG1543">
    <property type="taxonomic scope" value="Eukaryota"/>
</dbReference>
<dbReference type="GeneTree" id="ENSGT00970000196739"/>
<dbReference type="HOGENOM" id="CLU_012184_3_3_1"/>
<dbReference type="InParanoid" id="P25807"/>
<dbReference type="OMA" id="CQSGYST"/>
<dbReference type="OrthoDB" id="10058785at2759"/>
<dbReference type="PhylomeDB" id="P25807"/>
<dbReference type="PRO" id="PR:P25807"/>
<dbReference type="Proteomes" id="UP000001940">
    <property type="component" value="Chromosome V"/>
</dbReference>
<dbReference type="Bgee" id="WBGene00000781">
    <property type="expression patterns" value="Expressed in adult organism and 6 other cell types or tissues"/>
</dbReference>
<dbReference type="GO" id="GO:0005615">
    <property type="term" value="C:extracellular space"/>
    <property type="evidence" value="ECO:0000318"/>
    <property type="project" value="GO_Central"/>
</dbReference>
<dbReference type="GO" id="GO:0005764">
    <property type="term" value="C:lysosome"/>
    <property type="evidence" value="ECO:0000318"/>
    <property type="project" value="GO_Central"/>
</dbReference>
<dbReference type="GO" id="GO:0004197">
    <property type="term" value="F:cysteine-type endopeptidase activity"/>
    <property type="evidence" value="ECO:0000318"/>
    <property type="project" value="GO_Central"/>
</dbReference>
<dbReference type="GO" id="GO:0051603">
    <property type="term" value="P:proteolysis involved in protein catabolic process"/>
    <property type="evidence" value="ECO:0000318"/>
    <property type="project" value="GO_Central"/>
</dbReference>
<dbReference type="CDD" id="cd02620">
    <property type="entry name" value="Peptidase_C1A_CathepsinB"/>
    <property type="match status" value="1"/>
</dbReference>
<dbReference type="FunFam" id="3.90.70.10:FF:000031">
    <property type="entry name" value="Cathepsin B"/>
    <property type="match status" value="1"/>
</dbReference>
<dbReference type="Gene3D" id="3.90.70.10">
    <property type="entry name" value="Cysteine proteinases"/>
    <property type="match status" value="1"/>
</dbReference>
<dbReference type="InterPro" id="IPR038765">
    <property type="entry name" value="Papain-like_cys_pep_sf"/>
</dbReference>
<dbReference type="InterPro" id="IPR025661">
    <property type="entry name" value="Pept_asp_AS"/>
</dbReference>
<dbReference type="InterPro" id="IPR000169">
    <property type="entry name" value="Pept_cys_AS"/>
</dbReference>
<dbReference type="InterPro" id="IPR025660">
    <property type="entry name" value="Pept_his_AS"/>
</dbReference>
<dbReference type="InterPro" id="IPR013128">
    <property type="entry name" value="Peptidase_C1A"/>
</dbReference>
<dbReference type="InterPro" id="IPR000668">
    <property type="entry name" value="Peptidase_C1A_C"/>
</dbReference>
<dbReference type="PANTHER" id="PTHR12411">
    <property type="entry name" value="CYSTEINE PROTEASE FAMILY C1-RELATED"/>
    <property type="match status" value="1"/>
</dbReference>
<dbReference type="Pfam" id="PF00112">
    <property type="entry name" value="Peptidase_C1"/>
    <property type="match status" value="1"/>
</dbReference>
<dbReference type="PRINTS" id="PR00705">
    <property type="entry name" value="PAPAIN"/>
</dbReference>
<dbReference type="SMART" id="SM00645">
    <property type="entry name" value="Pept_C1"/>
    <property type="match status" value="1"/>
</dbReference>
<dbReference type="SUPFAM" id="SSF54001">
    <property type="entry name" value="Cysteine proteinases"/>
    <property type="match status" value="1"/>
</dbReference>
<dbReference type="PROSITE" id="PS00640">
    <property type="entry name" value="THIOL_PROTEASE_ASN"/>
    <property type="match status" value="1"/>
</dbReference>
<dbReference type="PROSITE" id="PS00139">
    <property type="entry name" value="THIOL_PROTEASE_CYS"/>
    <property type="match status" value="1"/>
</dbReference>
<dbReference type="PROSITE" id="PS00639">
    <property type="entry name" value="THIOL_PROTEASE_HIS"/>
    <property type="match status" value="1"/>
</dbReference>
<protein>
    <recommendedName>
        <fullName>Gut-specific cysteine proteinase</fullName>
        <ecNumber>3.4.22.-</ecNumber>
    </recommendedName>
</protein>
<comment type="function">
    <text evidence="6">Thiol protease. Has a role as a digestive enzyme.</text>
</comment>
<comment type="tissue specificity">
    <text evidence="6 7">Larvae exhibit strong expression in gut cells and weak expression in hypodermal cells. Adults exhibit the reverse: strong expression in hypodermal cells and weaker expression in gut cells.</text>
</comment>
<comment type="developmental stage">
    <text evidence="6 7">Larvae and adults, but not in embryos.</text>
</comment>
<comment type="induction">
    <text>Activated by a GATA-like transcription factor.</text>
</comment>
<comment type="similarity">
    <text evidence="3 4 5">Belongs to the peptidase C1 family.</text>
</comment>
<name>CPR1_CAEEL</name>
<proteinExistence type="evidence at protein level"/>
<evidence type="ECO:0000250" key="1"/>
<evidence type="ECO:0000255" key="2"/>
<evidence type="ECO:0000255" key="3">
    <source>
        <dbReference type="PROSITE-ProRule" id="PRU10088"/>
    </source>
</evidence>
<evidence type="ECO:0000255" key="4">
    <source>
        <dbReference type="PROSITE-ProRule" id="PRU10089"/>
    </source>
</evidence>
<evidence type="ECO:0000255" key="5">
    <source>
        <dbReference type="PROSITE-ProRule" id="PRU10090"/>
    </source>
</evidence>
<evidence type="ECO:0000269" key="6">
    <source>
    </source>
</evidence>
<evidence type="ECO:0000269" key="7">
    <source>
    </source>
</evidence>